<dbReference type="EC" id="7.1.1.-"/>
<dbReference type="EMBL" id="AP006714">
    <property type="protein sequence ID" value="BAD27362.1"/>
    <property type="molecule type" value="Genomic_DNA"/>
</dbReference>
<dbReference type="SMR" id="Q6ENP4"/>
<dbReference type="GO" id="GO:0009535">
    <property type="term" value="C:chloroplast thylakoid membrane"/>
    <property type="evidence" value="ECO:0007669"/>
    <property type="project" value="UniProtKB-SubCell"/>
</dbReference>
<dbReference type="GO" id="GO:0008137">
    <property type="term" value="F:NADH dehydrogenase (ubiquinone) activity"/>
    <property type="evidence" value="ECO:0007669"/>
    <property type="project" value="InterPro"/>
</dbReference>
<dbReference type="GO" id="GO:0048038">
    <property type="term" value="F:quinone binding"/>
    <property type="evidence" value="ECO:0007669"/>
    <property type="project" value="UniProtKB-KW"/>
</dbReference>
<dbReference type="FunFam" id="1.20.120.1200:FF:000002">
    <property type="entry name" value="NAD(P)H-quinone oxidoreductase subunit 6, chloroplastic"/>
    <property type="match status" value="1"/>
</dbReference>
<dbReference type="Gene3D" id="1.20.120.1200">
    <property type="entry name" value="NADH-ubiquinone/plastoquinone oxidoreductase chain 6, subunit NuoJ"/>
    <property type="match status" value="1"/>
</dbReference>
<dbReference type="InterPro" id="IPR050290">
    <property type="entry name" value="NAD(P)H-Q_Oxidoreduct_6"/>
</dbReference>
<dbReference type="InterPro" id="IPR001457">
    <property type="entry name" value="NADH_UbQ/plastoQ_OxRdtase_su6"/>
</dbReference>
<dbReference type="InterPro" id="IPR042106">
    <property type="entry name" value="Nuo/plastoQ_OxRdtase_6_NuoJ"/>
</dbReference>
<dbReference type="PANTHER" id="PTHR48479">
    <property type="entry name" value="NAD(P)H-QUINONE OXIDOREDUCTASE SUBUNIT 6, CHLOROPLASTIC"/>
    <property type="match status" value="1"/>
</dbReference>
<dbReference type="PANTHER" id="PTHR48479:SF1">
    <property type="entry name" value="NAD(P)H-QUINONE OXIDOREDUCTASE SUBUNIT 6, CHLOROPLASTIC"/>
    <property type="match status" value="1"/>
</dbReference>
<dbReference type="Pfam" id="PF00499">
    <property type="entry name" value="Oxidored_q3"/>
    <property type="match status" value="1"/>
</dbReference>
<comment type="function">
    <text evidence="1">NDH shuttles electrons from NAD(P)H:plastoquinone, via FMN and iron-sulfur (Fe-S) centers, to quinones in the photosynthetic chain and possibly in a chloroplast respiratory chain. The immediate electron acceptor for the enzyme in this species is believed to be plastoquinone. Couples the redox reaction to proton translocation, and thus conserves the redox energy in a proton gradient (By similarity).</text>
</comment>
<comment type="catalytic activity">
    <reaction>
        <text>a plastoquinone + NADH + (n+1) H(+)(in) = a plastoquinol + NAD(+) + n H(+)(out)</text>
        <dbReference type="Rhea" id="RHEA:42608"/>
        <dbReference type="Rhea" id="RHEA-COMP:9561"/>
        <dbReference type="Rhea" id="RHEA-COMP:9562"/>
        <dbReference type="ChEBI" id="CHEBI:15378"/>
        <dbReference type="ChEBI" id="CHEBI:17757"/>
        <dbReference type="ChEBI" id="CHEBI:57540"/>
        <dbReference type="ChEBI" id="CHEBI:57945"/>
        <dbReference type="ChEBI" id="CHEBI:62192"/>
    </reaction>
</comment>
<comment type="catalytic activity">
    <reaction>
        <text>a plastoquinone + NADPH + (n+1) H(+)(in) = a plastoquinol + NADP(+) + n H(+)(out)</text>
        <dbReference type="Rhea" id="RHEA:42612"/>
        <dbReference type="Rhea" id="RHEA-COMP:9561"/>
        <dbReference type="Rhea" id="RHEA-COMP:9562"/>
        <dbReference type="ChEBI" id="CHEBI:15378"/>
        <dbReference type="ChEBI" id="CHEBI:17757"/>
        <dbReference type="ChEBI" id="CHEBI:57783"/>
        <dbReference type="ChEBI" id="CHEBI:58349"/>
        <dbReference type="ChEBI" id="CHEBI:62192"/>
    </reaction>
</comment>
<comment type="subunit">
    <text evidence="1">NDH is composed of at least 16 different subunits, 5 of which are encoded in the nucleus.</text>
</comment>
<comment type="subcellular location">
    <subcellularLocation>
        <location evidence="1">Plastid</location>
        <location evidence="1">Chloroplast thylakoid membrane</location>
        <topology evidence="1">Multi-pass membrane protein</topology>
    </subcellularLocation>
</comment>
<comment type="similarity">
    <text evidence="3">Belongs to the complex I subunit 6 family.</text>
</comment>
<feature type="chain" id="PRO_0000226909" description="NAD(P)H-quinone oxidoreductase subunit 6, chloroplastic">
    <location>
        <begin position="1"/>
        <end position="176"/>
    </location>
</feature>
<feature type="transmembrane region" description="Helical" evidence="2">
    <location>
        <begin position="10"/>
        <end position="30"/>
    </location>
</feature>
<feature type="transmembrane region" description="Helical" evidence="2">
    <location>
        <begin position="33"/>
        <end position="53"/>
    </location>
</feature>
<feature type="transmembrane region" description="Helical" evidence="2">
    <location>
        <begin position="60"/>
        <end position="80"/>
    </location>
</feature>
<feature type="transmembrane region" description="Helical" evidence="2">
    <location>
        <begin position="95"/>
        <end position="115"/>
    </location>
</feature>
<feature type="transmembrane region" description="Helical" evidence="2">
    <location>
        <begin position="152"/>
        <end position="172"/>
    </location>
</feature>
<gene>
    <name type="primary">ndhG</name>
</gene>
<accession>Q6ENP4</accession>
<sequence>MDLPGPIHEILVLFGGFVLLLGGLGVVLLTNPIYSAFSLGLVLVCISLFYFLLNSYFVAVAQLLIYVGAINVLIIFAVMFVNGSEWSKDKNYWTIGDGFTLLLCITIPFSLMTTIPDTSWYGILWTTRSNQIVEQGLINNVQQIGIHLATDFYLPFELISLILLVSLIGAITMARQ</sequence>
<geneLocation type="chloroplast"/>
<protein>
    <recommendedName>
        <fullName>NAD(P)H-quinone oxidoreductase subunit 6, chloroplastic</fullName>
        <ecNumber>7.1.1.-</ecNumber>
    </recommendedName>
    <alternativeName>
        <fullName>NAD(P)H dehydrogenase subunit 6</fullName>
    </alternativeName>
    <alternativeName>
        <fullName>NADH-plastoquinone oxidoreductase subunit 6</fullName>
    </alternativeName>
</protein>
<name>NU6C_SACOF</name>
<proteinExistence type="inferred from homology"/>
<organism>
    <name type="scientific">Saccharum officinarum</name>
    <name type="common">Sugarcane</name>
    <dbReference type="NCBI Taxonomy" id="4547"/>
    <lineage>
        <taxon>Eukaryota</taxon>
        <taxon>Viridiplantae</taxon>
        <taxon>Streptophyta</taxon>
        <taxon>Embryophyta</taxon>
        <taxon>Tracheophyta</taxon>
        <taxon>Spermatophyta</taxon>
        <taxon>Magnoliopsida</taxon>
        <taxon>Liliopsida</taxon>
        <taxon>Poales</taxon>
        <taxon>Poaceae</taxon>
        <taxon>PACMAD clade</taxon>
        <taxon>Panicoideae</taxon>
        <taxon>Andropogonodae</taxon>
        <taxon>Andropogoneae</taxon>
        <taxon>Saccharinae</taxon>
        <taxon>Saccharum</taxon>
        <taxon>Saccharum officinarum species complex</taxon>
    </lineage>
</organism>
<evidence type="ECO:0000250" key="1"/>
<evidence type="ECO:0000255" key="2"/>
<evidence type="ECO:0000305" key="3"/>
<reference key="1">
    <citation type="journal article" date="2004" name="DNA Res.">
        <title>Complete nucleotide sequence of the sugarcane (Saccharum officinarum) chloroplast genome: a comparative analysis of four monocot chloroplast genomes.</title>
        <authorList>
            <person name="Asano T."/>
            <person name="Tsudzuki T."/>
            <person name="Takahashi S."/>
            <person name="Shimada H."/>
            <person name="Kadowaki K."/>
        </authorList>
    </citation>
    <scope>NUCLEOTIDE SEQUENCE [LARGE SCALE GENOMIC DNA]</scope>
</reference>
<keyword id="KW-0150">Chloroplast</keyword>
<keyword id="KW-0472">Membrane</keyword>
<keyword id="KW-0520">NAD</keyword>
<keyword id="KW-0521">NADP</keyword>
<keyword id="KW-0934">Plastid</keyword>
<keyword id="KW-0618">Plastoquinone</keyword>
<keyword id="KW-0874">Quinone</keyword>
<keyword id="KW-0793">Thylakoid</keyword>
<keyword id="KW-1278">Translocase</keyword>
<keyword id="KW-0812">Transmembrane</keyword>
<keyword id="KW-1133">Transmembrane helix</keyword>
<keyword id="KW-0813">Transport</keyword>